<reference key="1">
    <citation type="journal article" date="2007" name="J. Bacteriol.">
        <title>Whole-genome analysis of the methyl tert-butyl ether-degrading beta-proteobacterium Methylibium petroleiphilum PM1.</title>
        <authorList>
            <person name="Kane S.R."/>
            <person name="Chakicherla A.Y."/>
            <person name="Chain P.S.G."/>
            <person name="Schmidt R."/>
            <person name="Shin M.W."/>
            <person name="Legler T.C."/>
            <person name="Scow K.M."/>
            <person name="Larimer F.W."/>
            <person name="Lucas S.M."/>
            <person name="Richardson P.M."/>
            <person name="Hristova K.R."/>
        </authorList>
    </citation>
    <scope>NUCLEOTIDE SEQUENCE [LARGE SCALE GENOMIC DNA]</scope>
    <source>
        <strain>ATCC BAA-1232 / LMG 22953 / PM1</strain>
    </source>
</reference>
<accession>A2SIU8</accession>
<evidence type="ECO:0000255" key="1">
    <source>
        <dbReference type="HAMAP-Rule" id="MF_00017"/>
    </source>
</evidence>
<comment type="function">
    <text evidence="1">May play a role in DNA repair. It seems to be involved in an RecBC-independent recombinational process of DNA repair. It may act with RecF and RecO.</text>
</comment>
<comment type="similarity">
    <text evidence="1">Belongs to the RecR family.</text>
</comment>
<keyword id="KW-0227">DNA damage</keyword>
<keyword id="KW-0233">DNA recombination</keyword>
<keyword id="KW-0234">DNA repair</keyword>
<keyword id="KW-0479">Metal-binding</keyword>
<keyword id="KW-1185">Reference proteome</keyword>
<keyword id="KW-0862">Zinc</keyword>
<keyword id="KW-0863">Zinc-finger</keyword>
<dbReference type="EMBL" id="CP000555">
    <property type="protein sequence ID" value="ABM95487.1"/>
    <property type="molecule type" value="Genomic_DNA"/>
</dbReference>
<dbReference type="RefSeq" id="WP_011830120.1">
    <property type="nucleotide sequence ID" value="NC_008825.1"/>
</dbReference>
<dbReference type="SMR" id="A2SIU8"/>
<dbReference type="STRING" id="420662.Mpe_A2532"/>
<dbReference type="KEGG" id="mpt:Mpe_A2532"/>
<dbReference type="eggNOG" id="COG0353">
    <property type="taxonomic scope" value="Bacteria"/>
</dbReference>
<dbReference type="HOGENOM" id="CLU_060739_1_2_4"/>
<dbReference type="Proteomes" id="UP000000366">
    <property type="component" value="Chromosome"/>
</dbReference>
<dbReference type="GO" id="GO:0003677">
    <property type="term" value="F:DNA binding"/>
    <property type="evidence" value="ECO:0007669"/>
    <property type="project" value="UniProtKB-UniRule"/>
</dbReference>
<dbReference type="GO" id="GO:0008270">
    <property type="term" value="F:zinc ion binding"/>
    <property type="evidence" value="ECO:0007669"/>
    <property type="project" value="UniProtKB-KW"/>
</dbReference>
<dbReference type="GO" id="GO:0006310">
    <property type="term" value="P:DNA recombination"/>
    <property type="evidence" value="ECO:0007669"/>
    <property type="project" value="UniProtKB-UniRule"/>
</dbReference>
<dbReference type="GO" id="GO:0006281">
    <property type="term" value="P:DNA repair"/>
    <property type="evidence" value="ECO:0007669"/>
    <property type="project" value="UniProtKB-UniRule"/>
</dbReference>
<dbReference type="CDD" id="cd01025">
    <property type="entry name" value="TOPRIM_recR"/>
    <property type="match status" value="1"/>
</dbReference>
<dbReference type="Gene3D" id="3.40.1360.10">
    <property type="match status" value="1"/>
</dbReference>
<dbReference type="Gene3D" id="6.10.250.240">
    <property type="match status" value="1"/>
</dbReference>
<dbReference type="Gene3D" id="1.10.8.420">
    <property type="entry name" value="RecR Domain 1"/>
    <property type="match status" value="1"/>
</dbReference>
<dbReference type="HAMAP" id="MF_00017">
    <property type="entry name" value="RecR"/>
    <property type="match status" value="1"/>
</dbReference>
<dbReference type="InterPro" id="IPR000093">
    <property type="entry name" value="DNA_Rcmb_RecR"/>
</dbReference>
<dbReference type="InterPro" id="IPR023627">
    <property type="entry name" value="Rcmb_RecR"/>
</dbReference>
<dbReference type="InterPro" id="IPR015967">
    <property type="entry name" value="Rcmb_RecR_Znf"/>
</dbReference>
<dbReference type="InterPro" id="IPR006171">
    <property type="entry name" value="TOPRIM_dom"/>
</dbReference>
<dbReference type="InterPro" id="IPR034137">
    <property type="entry name" value="TOPRIM_RecR"/>
</dbReference>
<dbReference type="NCBIfam" id="TIGR00615">
    <property type="entry name" value="recR"/>
    <property type="match status" value="1"/>
</dbReference>
<dbReference type="PANTHER" id="PTHR30446">
    <property type="entry name" value="RECOMBINATION PROTEIN RECR"/>
    <property type="match status" value="1"/>
</dbReference>
<dbReference type="PANTHER" id="PTHR30446:SF0">
    <property type="entry name" value="RECOMBINATION PROTEIN RECR"/>
    <property type="match status" value="1"/>
</dbReference>
<dbReference type="Pfam" id="PF21175">
    <property type="entry name" value="RecR_C"/>
    <property type="match status" value="1"/>
</dbReference>
<dbReference type="Pfam" id="PF21176">
    <property type="entry name" value="RecR_HhH"/>
    <property type="match status" value="1"/>
</dbReference>
<dbReference type="Pfam" id="PF02132">
    <property type="entry name" value="RecR_ZnF"/>
    <property type="match status" value="1"/>
</dbReference>
<dbReference type="Pfam" id="PF13662">
    <property type="entry name" value="Toprim_4"/>
    <property type="match status" value="1"/>
</dbReference>
<dbReference type="SMART" id="SM00493">
    <property type="entry name" value="TOPRIM"/>
    <property type="match status" value="1"/>
</dbReference>
<dbReference type="SUPFAM" id="SSF111304">
    <property type="entry name" value="Recombination protein RecR"/>
    <property type="match status" value="1"/>
</dbReference>
<dbReference type="PROSITE" id="PS50880">
    <property type="entry name" value="TOPRIM"/>
    <property type="match status" value="1"/>
</dbReference>
<organism>
    <name type="scientific">Methylibium petroleiphilum (strain ATCC BAA-1232 / LMG 22953 / PM1)</name>
    <dbReference type="NCBI Taxonomy" id="420662"/>
    <lineage>
        <taxon>Bacteria</taxon>
        <taxon>Pseudomonadati</taxon>
        <taxon>Pseudomonadota</taxon>
        <taxon>Betaproteobacteria</taxon>
        <taxon>Burkholderiales</taxon>
        <taxon>Sphaerotilaceae</taxon>
        <taxon>Methylibium</taxon>
    </lineage>
</organism>
<sequence length="196" mass="21125">MAASSTLESLTEALRRLPGVGVKSAQRMAYHLLQHDREGALRLARALEQAVATVRHCERCNTFTEAPVCSTCLDPARERRQLCVVETPADQAAVERSGSYHGLYFVLMGRLSPLDGIGVHDIGLEKLLARATDGEVQELIVATNFTAEGEATAHVIAQALKGRGPSVTRLARGVPVGSELEYVDLGTIAHALSDRR</sequence>
<proteinExistence type="inferred from homology"/>
<name>RECR_METPP</name>
<gene>
    <name evidence="1" type="primary">recR</name>
    <name type="ordered locus">Mpe_A2532</name>
</gene>
<feature type="chain" id="PRO_0000322908" description="Recombination protein RecR">
    <location>
        <begin position="1"/>
        <end position="196"/>
    </location>
</feature>
<feature type="domain" description="Toprim" evidence="1">
    <location>
        <begin position="80"/>
        <end position="175"/>
    </location>
</feature>
<feature type="zinc finger region" description="C4-type" evidence="1">
    <location>
        <begin position="57"/>
        <end position="72"/>
    </location>
</feature>
<protein>
    <recommendedName>
        <fullName evidence="1">Recombination protein RecR</fullName>
    </recommendedName>
</protein>